<gene>
    <name evidence="1" type="primary">trm1</name>
    <name type="synonym">trmI</name>
    <name type="ordered locus">MMP0228</name>
</gene>
<proteinExistence type="inferred from homology"/>
<evidence type="ECO:0000255" key="1">
    <source>
        <dbReference type="HAMAP-Rule" id="MF_00290"/>
    </source>
</evidence>
<dbReference type="EC" id="2.1.1.216" evidence="1"/>
<dbReference type="EMBL" id="BX950229">
    <property type="protein sequence ID" value="CAF29784.1"/>
    <property type="molecule type" value="Genomic_DNA"/>
</dbReference>
<dbReference type="SMR" id="P0CW65"/>
<dbReference type="STRING" id="267377.MMP0228"/>
<dbReference type="EnsemblBacteria" id="CAF29784">
    <property type="protein sequence ID" value="CAF29784"/>
    <property type="gene ID" value="MMP0228"/>
</dbReference>
<dbReference type="KEGG" id="mmp:MMP0228"/>
<dbReference type="PATRIC" id="fig|267377.15.peg.230"/>
<dbReference type="eggNOG" id="arCOG01219">
    <property type="taxonomic scope" value="Archaea"/>
</dbReference>
<dbReference type="HOGENOM" id="CLU_010862_5_1_2"/>
<dbReference type="OrthoDB" id="372177at2157"/>
<dbReference type="Proteomes" id="UP000000590">
    <property type="component" value="Chromosome"/>
</dbReference>
<dbReference type="GO" id="GO:0160104">
    <property type="term" value="F:tRNA (guanine(26)-N2)-dimethyltransferase activity"/>
    <property type="evidence" value="ECO:0007669"/>
    <property type="project" value="UniProtKB-UniRule"/>
</dbReference>
<dbReference type="GO" id="GO:0000049">
    <property type="term" value="F:tRNA binding"/>
    <property type="evidence" value="ECO:0007669"/>
    <property type="project" value="UniProtKB-KW"/>
</dbReference>
<dbReference type="GO" id="GO:0002940">
    <property type="term" value="P:tRNA N2-guanine methylation"/>
    <property type="evidence" value="ECO:0007669"/>
    <property type="project" value="TreeGrafter"/>
</dbReference>
<dbReference type="CDD" id="cd02440">
    <property type="entry name" value="AdoMet_MTases"/>
    <property type="match status" value="1"/>
</dbReference>
<dbReference type="FunFam" id="3.40.50.150:FF:000272">
    <property type="entry name" value="tRNA (guanine(26)-N(2))-dimethyltransferase"/>
    <property type="match status" value="1"/>
</dbReference>
<dbReference type="Gene3D" id="3.30.56.70">
    <property type="entry name" value="N2,N2-dimethylguanosine tRNA methyltransferase, C-terminal domain"/>
    <property type="match status" value="1"/>
</dbReference>
<dbReference type="Gene3D" id="3.40.50.150">
    <property type="entry name" value="Vaccinia Virus protein VP39"/>
    <property type="match status" value="1"/>
</dbReference>
<dbReference type="HAMAP" id="MF_00290">
    <property type="entry name" value="tRNA_dimethyltr_TRM1"/>
    <property type="match status" value="1"/>
</dbReference>
<dbReference type="InterPro" id="IPR029063">
    <property type="entry name" value="SAM-dependent_MTases_sf"/>
</dbReference>
<dbReference type="InterPro" id="IPR002905">
    <property type="entry name" value="Trm1"/>
</dbReference>
<dbReference type="InterPro" id="IPR022923">
    <property type="entry name" value="TRM1_arc_bac"/>
</dbReference>
<dbReference type="InterPro" id="IPR042296">
    <property type="entry name" value="tRNA_met_Trm1_C"/>
</dbReference>
<dbReference type="NCBIfam" id="TIGR00308">
    <property type="entry name" value="TRM1"/>
    <property type="match status" value="1"/>
</dbReference>
<dbReference type="PANTHER" id="PTHR10631">
    <property type="entry name" value="N 2 ,N 2 -DIMETHYLGUANOSINE TRNA METHYLTRANSFERASE"/>
    <property type="match status" value="1"/>
</dbReference>
<dbReference type="PANTHER" id="PTHR10631:SF3">
    <property type="entry name" value="TRNA (GUANINE(26)-N(2))-DIMETHYLTRANSFERASE"/>
    <property type="match status" value="1"/>
</dbReference>
<dbReference type="Pfam" id="PF02005">
    <property type="entry name" value="TRM"/>
    <property type="match status" value="1"/>
</dbReference>
<dbReference type="SUPFAM" id="SSF53335">
    <property type="entry name" value="S-adenosyl-L-methionine-dependent methyltransferases"/>
    <property type="match status" value="1"/>
</dbReference>
<dbReference type="PROSITE" id="PS51626">
    <property type="entry name" value="SAM_MT_TRM1"/>
    <property type="match status" value="1"/>
</dbReference>
<keyword id="KW-0489">Methyltransferase</keyword>
<keyword id="KW-1185">Reference proteome</keyword>
<keyword id="KW-0694">RNA-binding</keyword>
<keyword id="KW-0949">S-adenosyl-L-methionine</keyword>
<keyword id="KW-0808">Transferase</keyword>
<keyword id="KW-0819">tRNA processing</keyword>
<keyword id="KW-0820">tRNA-binding</keyword>
<feature type="chain" id="PRO_0000408227" description="tRNA (guanine(26)-N(2))-dimethyltransferase">
    <location>
        <begin position="1"/>
        <end position="373"/>
    </location>
</feature>
<feature type="domain" description="Trm1 methyltransferase" evidence="1">
    <location>
        <begin position="2"/>
        <end position="365"/>
    </location>
</feature>
<feature type="binding site" evidence="1">
    <location>
        <position position="35"/>
    </location>
    <ligand>
        <name>S-adenosyl-L-methionine</name>
        <dbReference type="ChEBI" id="CHEBI:59789"/>
    </ligand>
</feature>
<feature type="binding site" evidence="1">
    <location>
        <position position="66"/>
    </location>
    <ligand>
        <name>S-adenosyl-L-methionine</name>
        <dbReference type="ChEBI" id="CHEBI:59789"/>
    </ligand>
</feature>
<feature type="binding site" evidence="1">
    <location>
        <position position="86"/>
    </location>
    <ligand>
        <name>S-adenosyl-L-methionine</name>
        <dbReference type="ChEBI" id="CHEBI:59789"/>
    </ligand>
</feature>
<feature type="binding site" evidence="1">
    <location>
        <position position="113"/>
    </location>
    <ligand>
        <name>S-adenosyl-L-methionine</name>
        <dbReference type="ChEBI" id="CHEBI:59789"/>
    </ligand>
</feature>
<feature type="binding site" evidence="1">
    <location>
        <position position="114"/>
    </location>
    <ligand>
        <name>S-adenosyl-L-methionine</name>
        <dbReference type="ChEBI" id="CHEBI:59789"/>
    </ligand>
</feature>
<name>TRM1_METMP</name>
<reference key="1">
    <citation type="journal article" date="2004" name="J. Bacteriol.">
        <title>Complete genome sequence of the genetically tractable hydrogenotrophic methanogen Methanococcus maripaludis.</title>
        <authorList>
            <person name="Hendrickson E.L."/>
            <person name="Kaul R."/>
            <person name="Zhou Y."/>
            <person name="Bovee D."/>
            <person name="Chapman P."/>
            <person name="Chung J."/>
            <person name="Conway de Macario E."/>
            <person name="Dodsworth J.A."/>
            <person name="Gillett W."/>
            <person name="Graham D.E."/>
            <person name="Hackett M."/>
            <person name="Haydock A.K."/>
            <person name="Kang A."/>
            <person name="Land M.L."/>
            <person name="Levy R."/>
            <person name="Lie T.J."/>
            <person name="Major T.A."/>
            <person name="Moore B.C."/>
            <person name="Porat I."/>
            <person name="Palmeiri A."/>
            <person name="Rouse G."/>
            <person name="Saenphimmachak C."/>
            <person name="Soell D."/>
            <person name="Van Dien S."/>
            <person name="Wang T."/>
            <person name="Whitman W.B."/>
            <person name="Xia Q."/>
            <person name="Zhang Y."/>
            <person name="Larimer F.W."/>
            <person name="Olson M.V."/>
            <person name="Leigh J.A."/>
        </authorList>
    </citation>
    <scope>NUCLEOTIDE SEQUENCE [LARGE SCALE GENOMIC DNA]</scope>
    <source>
        <strain>DSM 14266 / JCM 13030 / NBRC 101832 / S2 / LL</strain>
    </source>
</reference>
<accession>P0CW65</accession>
<accession>Q9HH73</accession>
<organism>
    <name type="scientific">Methanococcus maripaludis (strain DSM 14266 / JCM 13030 / NBRC 101832 / S2 / LL)</name>
    <dbReference type="NCBI Taxonomy" id="267377"/>
    <lineage>
        <taxon>Archaea</taxon>
        <taxon>Methanobacteriati</taxon>
        <taxon>Methanobacteriota</taxon>
        <taxon>Methanomada group</taxon>
        <taxon>Methanococci</taxon>
        <taxon>Methanococcales</taxon>
        <taxon>Methanococcaceae</taxon>
        <taxon>Methanococcus</taxon>
    </lineage>
</organism>
<comment type="function">
    <text evidence="1">Dimethylates a single guanine residue at position 26 of a number of tRNAs using S-adenosyl-L-methionine as donor of the methyl groups.</text>
</comment>
<comment type="catalytic activity">
    <reaction evidence="1">
        <text>guanosine(26) in tRNA + 2 S-adenosyl-L-methionine = N(2)-dimethylguanosine(26) in tRNA + 2 S-adenosyl-L-homocysteine + 2 H(+)</text>
        <dbReference type="Rhea" id="RHEA:43140"/>
        <dbReference type="Rhea" id="RHEA-COMP:10359"/>
        <dbReference type="Rhea" id="RHEA-COMP:10360"/>
        <dbReference type="ChEBI" id="CHEBI:15378"/>
        <dbReference type="ChEBI" id="CHEBI:57856"/>
        <dbReference type="ChEBI" id="CHEBI:59789"/>
        <dbReference type="ChEBI" id="CHEBI:74269"/>
        <dbReference type="ChEBI" id="CHEBI:74513"/>
        <dbReference type="EC" id="2.1.1.216"/>
    </reaction>
</comment>
<comment type="similarity">
    <text evidence="1">Belongs to the class I-like SAM-binding methyltransferase superfamily. Trm1 family.</text>
</comment>
<protein>
    <recommendedName>
        <fullName evidence="1">tRNA (guanine(26)-N(2))-dimethyltransferase</fullName>
        <ecNumber evidence="1">2.1.1.216</ecNumber>
    </recommendedName>
    <alternativeName>
        <fullName evidence="1">tRNA 2,2-dimethylguanosine-26 methyltransferase</fullName>
    </alternativeName>
    <alternativeName>
        <fullName evidence="1">tRNA(guanine-26,N(2)-N(2)) methyltransferase</fullName>
    </alternativeName>
    <alternativeName>
        <fullName evidence="1">tRNA(m(2,2)G26)dimethyltransferase</fullName>
    </alternativeName>
</protein>
<sequence length="373" mass="41820">MKIISEGETKLMVPEESTLSKKDTVFYNPVMETNRDISVSVVQSFLDDFKRDEFLMCDPLGGSGARGIRYAKELKFNGDLKVSIGDINPSAVKMIKENLKLNELENVEVFHEDANVLLSKNFKVFNVVDLDPFGSPVPYLDSGIRASLTKGGLLCMTATDTAVLCGAYRKTCIRKYNAVPLKGDKELAVRLMIGYAVKMASKYDIGLKPIFSHVTDHYARTFMVTERGAGKADSAIENLGYIRQDSEQKSFKTFEEGSEKGYAGPFYLGEISDKNIVQNALNTAKTRNYSKRAVNILEMISRESEINQVGCFDIHELCSFIKKLVPPVNDIMENLKENGFKVTRVHYNPYGLKTDAELSDLVVLISEYHSKKY</sequence>